<proteinExistence type="evidence at protein level"/>
<evidence type="ECO:0000269" key="1">
    <source>
    </source>
</evidence>
<evidence type="ECO:0000305" key="2"/>
<sequence>MSEKTLTRMDLSEAVFREVGLSRNESAQLVETVLQHMSDALVRGETVKISSFGTFSVRDKTSRMGRNPKTGEEVPISPRRVLSFRPSHLMKDRVAERNAK</sequence>
<comment type="function">
    <text>This protein is one of the two subunits of integration host factor, a specific DNA-binding protein that functions in genetic recombination as well as in transcriptional and translational control. Involved in hydrogenase gene expression.</text>
</comment>
<comment type="subunit">
    <text>Heterodimer of an alpha and a beta chain.</text>
</comment>
<comment type="similarity">
    <text evidence="2">Belongs to the bacterial histone-like protein family.</text>
</comment>
<gene>
    <name type="primary">ihfA</name>
    <name type="synonym">himA</name>
</gene>
<keyword id="KW-0903">Direct protein sequencing</keyword>
<keyword id="KW-0233">DNA recombination</keyword>
<keyword id="KW-0238">DNA-binding</keyword>
<keyword id="KW-0804">Transcription</keyword>
<keyword id="KW-0805">Transcription regulation</keyword>
<keyword id="KW-0810">Translation regulation</keyword>
<dbReference type="EMBL" id="M84030">
    <property type="protein sequence ID" value="AAA26128.1"/>
    <property type="molecule type" value="Genomic_DNA"/>
</dbReference>
<dbReference type="PIR" id="D41608">
    <property type="entry name" value="D41608"/>
</dbReference>
<dbReference type="SMR" id="P30787"/>
<dbReference type="GO" id="GO:0005829">
    <property type="term" value="C:cytosol"/>
    <property type="evidence" value="ECO:0007669"/>
    <property type="project" value="TreeGrafter"/>
</dbReference>
<dbReference type="GO" id="GO:0003677">
    <property type="term" value="F:DNA binding"/>
    <property type="evidence" value="ECO:0007669"/>
    <property type="project" value="UniProtKB-UniRule"/>
</dbReference>
<dbReference type="GO" id="GO:0030527">
    <property type="term" value="F:structural constituent of chromatin"/>
    <property type="evidence" value="ECO:0007669"/>
    <property type="project" value="InterPro"/>
</dbReference>
<dbReference type="GO" id="GO:0006310">
    <property type="term" value="P:DNA recombination"/>
    <property type="evidence" value="ECO:0007669"/>
    <property type="project" value="UniProtKB-UniRule"/>
</dbReference>
<dbReference type="GO" id="GO:0009893">
    <property type="term" value="P:positive regulation of metabolic process"/>
    <property type="evidence" value="ECO:0007669"/>
    <property type="project" value="UniProtKB-ARBA"/>
</dbReference>
<dbReference type="GO" id="GO:0006355">
    <property type="term" value="P:regulation of DNA-templated transcription"/>
    <property type="evidence" value="ECO:0007669"/>
    <property type="project" value="UniProtKB-UniRule"/>
</dbReference>
<dbReference type="GO" id="GO:0006417">
    <property type="term" value="P:regulation of translation"/>
    <property type="evidence" value="ECO:0007669"/>
    <property type="project" value="UniProtKB-UniRule"/>
</dbReference>
<dbReference type="CDD" id="cd13835">
    <property type="entry name" value="IHF_A"/>
    <property type="match status" value="1"/>
</dbReference>
<dbReference type="Gene3D" id="4.10.520.10">
    <property type="entry name" value="IHF-like DNA-binding proteins"/>
    <property type="match status" value="1"/>
</dbReference>
<dbReference type="HAMAP" id="MF_00380">
    <property type="entry name" value="IHF_alpha"/>
    <property type="match status" value="1"/>
</dbReference>
<dbReference type="InterPro" id="IPR000119">
    <property type="entry name" value="Hist_DNA-bd"/>
</dbReference>
<dbReference type="InterPro" id="IPR020816">
    <property type="entry name" value="Histone-like_DNA-bd_CS"/>
</dbReference>
<dbReference type="InterPro" id="IPR010992">
    <property type="entry name" value="IHF-like_DNA-bd_dom_sf"/>
</dbReference>
<dbReference type="InterPro" id="IPR005684">
    <property type="entry name" value="IHF_alpha"/>
</dbReference>
<dbReference type="NCBIfam" id="TIGR00987">
    <property type="entry name" value="himA"/>
    <property type="match status" value="1"/>
</dbReference>
<dbReference type="NCBIfam" id="NF001401">
    <property type="entry name" value="PRK00285.1"/>
    <property type="match status" value="1"/>
</dbReference>
<dbReference type="PANTHER" id="PTHR33175">
    <property type="entry name" value="DNA-BINDING PROTEIN HU"/>
    <property type="match status" value="1"/>
</dbReference>
<dbReference type="PANTHER" id="PTHR33175:SF2">
    <property type="entry name" value="INTEGRATION HOST FACTOR SUBUNIT ALPHA"/>
    <property type="match status" value="1"/>
</dbReference>
<dbReference type="Pfam" id="PF00216">
    <property type="entry name" value="Bac_DNA_binding"/>
    <property type="match status" value="1"/>
</dbReference>
<dbReference type="PRINTS" id="PR01727">
    <property type="entry name" value="DNABINDINGHU"/>
</dbReference>
<dbReference type="SMART" id="SM00411">
    <property type="entry name" value="BHL"/>
    <property type="match status" value="1"/>
</dbReference>
<dbReference type="SUPFAM" id="SSF47729">
    <property type="entry name" value="IHF-like DNA-binding proteins"/>
    <property type="match status" value="1"/>
</dbReference>
<dbReference type="PROSITE" id="PS00045">
    <property type="entry name" value="HISTONE_LIKE"/>
    <property type="match status" value="1"/>
</dbReference>
<name>IHFA_RHOCA</name>
<protein>
    <recommendedName>
        <fullName>Integration host factor subunit alpha</fullName>
        <shortName>IHF-alpha</shortName>
    </recommendedName>
</protein>
<feature type="initiator methionine" description="Removed" evidence="1">
    <location>
        <position position="1"/>
    </location>
</feature>
<feature type="chain" id="PRO_0000105024" description="Integration host factor subunit alpha">
    <location>
        <begin position="2"/>
        <end position="100"/>
    </location>
</feature>
<feature type="mutagenesis site" description="In IR4; altered DNA-binding specificity.">
    <original>R</original>
    <variation>C</variation>
    <location>
        <position position="8"/>
    </location>
</feature>
<reference key="1">
    <citation type="journal article" date="1991" name="Proc. Natl. Acad. Sci. U.S.A.">
        <title>A mutation in a Rhodobacter capsulatus gene encoding an integration host factor-like protein impairs in vivo hydrogenase expression.</title>
        <authorList>
            <person name="Toussaint B."/>
            <person name="Bosc C."/>
            <person name="Richaud P."/>
            <person name="Colbeau A."/>
            <person name="Vignais P.M."/>
        </authorList>
    </citation>
    <scope>NUCLEOTIDE SEQUENCE [GENOMIC DNA]</scope>
    <source>
        <strain>ATCC 33303 / B10</strain>
    </source>
</reference>
<reference key="2">
    <citation type="journal article" date="1993" name="J. Bacteriol.">
        <title>Purification of the integration host factor homolog of Rhodobacter capsulatus: cloning and sequencing of the hip gene, which encodes the beta subunit.</title>
        <authorList>
            <person name="Toussaint B."/>
            <person name="Delic-Attree I."/>
            <person name="de Sury D'Aspremont R."/>
            <person name="David L."/>
            <person name="Vincon M."/>
            <person name="Vignais P.M."/>
        </authorList>
    </citation>
    <scope>PROTEIN SEQUENCE OF 2-15 (MUTANT IR4)</scope>
    <source>
        <strain>ATCC 33303 / B10</strain>
    </source>
</reference>
<organism>
    <name type="scientific">Rhodobacter capsulatus</name>
    <name type="common">Rhodopseudomonas capsulata</name>
    <dbReference type="NCBI Taxonomy" id="1061"/>
    <lineage>
        <taxon>Bacteria</taxon>
        <taxon>Pseudomonadati</taxon>
        <taxon>Pseudomonadota</taxon>
        <taxon>Alphaproteobacteria</taxon>
        <taxon>Rhodobacterales</taxon>
        <taxon>Rhodobacter group</taxon>
        <taxon>Rhodobacter</taxon>
    </lineage>
</organism>
<accession>P30787</accession>